<organism>
    <name type="scientific">Escherichia coli O6:K15:H31 (strain 536 / UPEC)</name>
    <dbReference type="NCBI Taxonomy" id="362663"/>
    <lineage>
        <taxon>Bacteria</taxon>
        <taxon>Pseudomonadati</taxon>
        <taxon>Pseudomonadota</taxon>
        <taxon>Gammaproteobacteria</taxon>
        <taxon>Enterobacterales</taxon>
        <taxon>Enterobacteriaceae</taxon>
        <taxon>Escherichia</taxon>
    </lineage>
</organism>
<protein>
    <recommendedName>
        <fullName evidence="1">UPF0213 protein YhbQ</fullName>
    </recommendedName>
</protein>
<gene>
    <name evidence="1" type="primary">yhbQ</name>
    <name type="ordered locus">ECP_3243</name>
</gene>
<evidence type="ECO:0000255" key="1">
    <source>
        <dbReference type="HAMAP-Rule" id="MF_01029"/>
    </source>
</evidence>
<accession>Q0TCV4</accession>
<proteinExistence type="inferred from homology"/>
<reference key="1">
    <citation type="journal article" date="2006" name="Mol. Microbiol.">
        <title>Role of pathogenicity island-associated integrases in the genome plasticity of uropathogenic Escherichia coli strain 536.</title>
        <authorList>
            <person name="Hochhut B."/>
            <person name="Wilde C."/>
            <person name="Balling G."/>
            <person name="Middendorf B."/>
            <person name="Dobrindt U."/>
            <person name="Brzuszkiewicz E."/>
            <person name="Gottschalk G."/>
            <person name="Carniel E."/>
            <person name="Hacker J."/>
        </authorList>
    </citation>
    <scope>NUCLEOTIDE SEQUENCE [LARGE SCALE GENOMIC DNA]</scope>
    <source>
        <strain>536 / UPEC</strain>
    </source>
</reference>
<sequence>MTPWFLYLIRTADNKLYTGITTDVERRYQQHQSGKGAKALRGKGELTLAFSAPVGDRSLALRAEYRVKQLTKRQKERLVAEGAVFAELLSSLQTPEIKSD</sequence>
<comment type="similarity">
    <text evidence="1">Belongs to the UPF0213 family.</text>
</comment>
<feature type="chain" id="PRO_1000063664" description="UPF0213 protein YhbQ">
    <location>
        <begin position="1"/>
        <end position="100"/>
    </location>
</feature>
<feature type="domain" description="GIY-YIG" evidence="1">
    <location>
        <begin position="2"/>
        <end position="77"/>
    </location>
</feature>
<dbReference type="EMBL" id="CP000247">
    <property type="protein sequence ID" value="ABG71225.1"/>
    <property type="molecule type" value="Genomic_DNA"/>
</dbReference>
<dbReference type="RefSeq" id="WP_000189322.1">
    <property type="nucleotide sequence ID" value="NC_008253.1"/>
</dbReference>
<dbReference type="SMR" id="Q0TCV4"/>
<dbReference type="KEGG" id="ecp:ECP_3243"/>
<dbReference type="HOGENOM" id="CLU_135650_0_1_6"/>
<dbReference type="Proteomes" id="UP000009182">
    <property type="component" value="Chromosome"/>
</dbReference>
<dbReference type="CDD" id="cd10456">
    <property type="entry name" value="GIY-YIG_UPF0213"/>
    <property type="match status" value="1"/>
</dbReference>
<dbReference type="FunFam" id="3.40.1440.10:FF:000002">
    <property type="entry name" value="UPF0213 protein YhbQ"/>
    <property type="match status" value="1"/>
</dbReference>
<dbReference type="Gene3D" id="3.40.1440.10">
    <property type="entry name" value="GIY-YIG endonuclease"/>
    <property type="match status" value="1"/>
</dbReference>
<dbReference type="HAMAP" id="MF_01029">
    <property type="entry name" value="UPF0213"/>
    <property type="match status" value="1"/>
</dbReference>
<dbReference type="InterPro" id="IPR000305">
    <property type="entry name" value="GIY-YIG_endonuc"/>
</dbReference>
<dbReference type="InterPro" id="IPR035901">
    <property type="entry name" value="GIY-YIG_endonuc_sf"/>
</dbReference>
<dbReference type="InterPro" id="IPR050190">
    <property type="entry name" value="UPF0213_domain"/>
</dbReference>
<dbReference type="InterPro" id="IPR022992">
    <property type="entry name" value="UPF0213_GIY-YIG_endonuc"/>
</dbReference>
<dbReference type="PANTHER" id="PTHR34477">
    <property type="entry name" value="UPF0213 PROTEIN YHBQ"/>
    <property type="match status" value="1"/>
</dbReference>
<dbReference type="PANTHER" id="PTHR34477:SF1">
    <property type="entry name" value="UPF0213 PROTEIN YHBQ"/>
    <property type="match status" value="1"/>
</dbReference>
<dbReference type="Pfam" id="PF01541">
    <property type="entry name" value="GIY-YIG"/>
    <property type="match status" value="1"/>
</dbReference>
<dbReference type="SMART" id="SM00465">
    <property type="entry name" value="GIYc"/>
    <property type="match status" value="1"/>
</dbReference>
<dbReference type="SUPFAM" id="SSF82771">
    <property type="entry name" value="GIY-YIG endonuclease"/>
    <property type="match status" value="1"/>
</dbReference>
<dbReference type="PROSITE" id="PS50164">
    <property type="entry name" value="GIY_YIG"/>
    <property type="match status" value="1"/>
</dbReference>
<name>YHBQ_ECOL5</name>